<proteinExistence type="inferred from homology"/>
<comment type="function">
    <text evidence="1">With EpmB is involved in the beta-lysylation step of the post-translational modification of translation elongation factor P (EF-P). Catalyzes the ATP-dependent activation of (R)-beta-lysine produced by EpmB, forming a lysyl-adenylate, from which the beta-lysyl moiety is then transferred to the epsilon-amino group of a conserved specific lysine residue in EF-P.</text>
</comment>
<comment type="catalytic activity">
    <reaction evidence="1">
        <text>D-beta-lysine + L-lysyl-[protein] + ATP = N(6)-((3R)-3,6-diaminohexanoyl)-L-lysyl-[protein] + AMP + diphosphate + H(+)</text>
        <dbReference type="Rhea" id="RHEA:83435"/>
        <dbReference type="Rhea" id="RHEA-COMP:9752"/>
        <dbReference type="Rhea" id="RHEA-COMP:20131"/>
        <dbReference type="ChEBI" id="CHEBI:15378"/>
        <dbReference type="ChEBI" id="CHEBI:29969"/>
        <dbReference type="ChEBI" id="CHEBI:30616"/>
        <dbReference type="ChEBI" id="CHEBI:33019"/>
        <dbReference type="ChEBI" id="CHEBI:84138"/>
        <dbReference type="ChEBI" id="CHEBI:156053"/>
        <dbReference type="ChEBI" id="CHEBI:456215"/>
    </reaction>
    <physiologicalReaction direction="left-to-right" evidence="1">
        <dbReference type="Rhea" id="RHEA:83436"/>
    </physiologicalReaction>
</comment>
<comment type="subunit">
    <text evidence="1">Homodimer.</text>
</comment>
<comment type="similarity">
    <text evidence="1">Belongs to the class-II aminoacyl-tRNA synthetase family. EpmA subfamily.</text>
</comment>
<accession>Q89A27</accession>
<name>EPMA_BUCBP</name>
<sequence>MNCNYLWKSSALLKNLHRRAKIIFEIRNYFFNLGILEVETPILSNYSVTDVNFIPFKTKLQITKKRMWLVPSPEYHMKRLLVQNIGAIYQISRSFRNNEFGGPYHNPEFTMLEWYSPYCNMFDFMKKVEKFLVFCLKVVQVKYISYQRAFIKYLNIDPLLAKKRELLDLINKFKFNHLISDCDSISTLLEILFTLKIEPNLNNKKLIFVYHYPADQAILAAINDNDSRVSDRFEVFFKGVELGNGFYELTDQAEHIRRFKLNNIQRRHKGICSVEVDQFFLKSLSRGLPPCSGIAIGLDRLIMLSLNLKTINEVIAFPIERC</sequence>
<organism>
    <name type="scientific">Buchnera aphidicola subsp. Baizongia pistaciae (strain Bp)</name>
    <dbReference type="NCBI Taxonomy" id="224915"/>
    <lineage>
        <taxon>Bacteria</taxon>
        <taxon>Pseudomonadati</taxon>
        <taxon>Pseudomonadota</taxon>
        <taxon>Gammaproteobacteria</taxon>
        <taxon>Enterobacterales</taxon>
        <taxon>Erwiniaceae</taxon>
        <taxon>Buchnera</taxon>
    </lineage>
</organism>
<protein>
    <recommendedName>
        <fullName evidence="1">Elongation factor P--(R)-beta-lysine ligase</fullName>
        <shortName evidence="1">EF-P--(R)-beta-lysine ligase</shortName>
        <ecNumber evidence="1">6.3.2.-</ecNumber>
    </recommendedName>
    <alternativeName>
        <fullName evidence="1">EF-P post-translational modification enzyme A</fullName>
    </alternativeName>
    <alternativeName>
        <fullName evidence="1">EF-P-lysine lysyltransferase</fullName>
    </alternativeName>
</protein>
<dbReference type="EC" id="6.3.2.-" evidence="1"/>
<dbReference type="EMBL" id="AE016826">
    <property type="protein sequence ID" value="AAO27230.1"/>
    <property type="molecule type" value="Genomic_DNA"/>
</dbReference>
<dbReference type="RefSeq" id="WP_011091631.1">
    <property type="nucleotide sequence ID" value="NC_004545.1"/>
</dbReference>
<dbReference type="SMR" id="Q89A27"/>
<dbReference type="STRING" id="224915.bbp_528"/>
<dbReference type="KEGG" id="bab:bbp_528"/>
<dbReference type="eggNOG" id="COG2269">
    <property type="taxonomic scope" value="Bacteria"/>
</dbReference>
<dbReference type="HOGENOM" id="CLU_008255_1_1_6"/>
<dbReference type="OrthoDB" id="9762036at2"/>
<dbReference type="Proteomes" id="UP000000601">
    <property type="component" value="Chromosome"/>
</dbReference>
<dbReference type="GO" id="GO:0005829">
    <property type="term" value="C:cytosol"/>
    <property type="evidence" value="ECO:0007669"/>
    <property type="project" value="TreeGrafter"/>
</dbReference>
<dbReference type="GO" id="GO:0016880">
    <property type="term" value="F:acid-ammonia (or amide) ligase activity"/>
    <property type="evidence" value="ECO:0007669"/>
    <property type="project" value="UniProtKB-UniRule"/>
</dbReference>
<dbReference type="GO" id="GO:0005524">
    <property type="term" value="F:ATP binding"/>
    <property type="evidence" value="ECO:0007669"/>
    <property type="project" value="UniProtKB-UniRule"/>
</dbReference>
<dbReference type="GO" id="GO:0004824">
    <property type="term" value="F:lysine-tRNA ligase activity"/>
    <property type="evidence" value="ECO:0007669"/>
    <property type="project" value="InterPro"/>
</dbReference>
<dbReference type="GO" id="GO:0000049">
    <property type="term" value="F:tRNA binding"/>
    <property type="evidence" value="ECO:0007669"/>
    <property type="project" value="TreeGrafter"/>
</dbReference>
<dbReference type="GO" id="GO:0006430">
    <property type="term" value="P:lysyl-tRNA aminoacylation"/>
    <property type="evidence" value="ECO:0007669"/>
    <property type="project" value="InterPro"/>
</dbReference>
<dbReference type="FunFam" id="3.30.930.10:FF:000017">
    <property type="entry name" value="Elongation factor P--(R)-beta-lysine ligase"/>
    <property type="match status" value="1"/>
</dbReference>
<dbReference type="Gene3D" id="3.30.930.10">
    <property type="entry name" value="Bira Bifunctional Protein, Domain 2"/>
    <property type="match status" value="1"/>
</dbReference>
<dbReference type="HAMAP" id="MF_00174">
    <property type="entry name" value="EF_P_modif_A"/>
    <property type="match status" value="1"/>
</dbReference>
<dbReference type="InterPro" id="IPR004364">
    <property type="entry name" value="Aa-tRNA-synt_II"/>
</dbReference>
<dbReference type="InterPro" id="IPR006195">
    <property type="entry name" value="aa-tRNA-synth_II"/>
</dbReference>
<dbReference type="InterPro" id="IPR045864">
    <property type="entry name" value="aa-tRNA-synth_II/BPL/LPL"/>
</dbReference>
<dbReference type="InterPro" id="IPR004525">
    <property type="entry name" value="EpmA"/>
</dbReference>
<dbReference type="NCBIfam" id="TIGR00462">
    <property type="entry name" value="genX"/>
    <property type="match status" value="1"/>
</dbReference>
<dbReference type="NCBIfam" id="NF006828">
    <property type="entry name" value="PRK09350.1"/>
    <property type="match status" value="1"/>
</dbReference>
<dbReference type="PANTHER" id="PTHR42918:SF6">
    <property type="entry name" value="ELONGATION FACTOR P--(R)-BETA-LYSINE LIGASE"/>
    <property type="match status" value="1"/>
</dbReference>
<dbReference type="PANTHER" id="PTHR42918">
    <property type="entry name" value="LYSYL-TRNA SYNTHETASE"/>
    <property type="match status" value="1"/>
</dbReference>
<dbReference type="Pfam" id="PF00152">
    <property type="entry name" value="tRNA-synt_2"/>
    <property type="match status" value="1"/>
</dbReference>
<dbReference type="SUPFAM" id="SSF55681">
    <property type="entry name" value="Class II aaRS and biotin synthetases"/>
    <property type="match status" value="1"/>
</dbReference>
<dbReference type="PROSITE" id="PS50862">
    <property type="entry name" value="AA_TRNA_LIGASE_II"/>
    <property type="match status" value="1"/>
</dbReference>
<gene>
    <name evidence="1" type="primary">epmA</name>
    <name type="synonym">yjeA</name>
    <name type="ordered locus">bbp_528</name>
</gene>
<evidence type="ECO:0000255" key="1">
    <source>
        <dbReference type="HAMAP-Rule" id="MF_00174"/>
    </source>
</evidence>
<feature type="chain" id="PRO_0000152718" description="Elongation factor P--(R)-beta-lysine ligase">
    <location>
        <begin position="1"/>
        <end position="322"/>
    </location>
</feature>
<feature type="binding site" evidence="1">
    <location>
        <begin position="72"/>
        <end position="74"/>
    </location>
    <ligand>
        <name>substrate</name>
    </ligand>
</feature>
<feature type="binding site" evidence="1">
    <location>
        <begin position="96"/>
        <end position="98"/>
    </location>
    <ligand>
        <name>ATP</name>
        <dbReference type="ChEBI" id="CHEBI:30616"/>
    </ligand>
</feature>
<feature type="binding site" evidence="1">
    <location>
        <position position="106"/>
    </location>
    <ligand>
        <name>ATP</name>
        <dbReference type="ChEBI" id="CHEBI:30616"/>
    </ligand>
</feature>
<feature type="binding site" evidence="1">
    <location>
        <position position="115"/>
    </location>
    <ligand>
        <name>substrate</name>
    </ligand>
</feature>
<feature type="binding site" evidence="1">
    <location>
        <begin position="241"/>
        <end position="242"/>
    </location>
    <ligand>
        <name>ATP</name>
        <dbReference type="ChEBI" id="CHEBI:30616"/>
    </ligand>
</feature>
<feature type="binding site" evidence="1">
    <location>
        <position position="248"/>
    </location>
    <ligand>
        <name>substrate</name>
    </ligand>
</feature>
<feature type="binding site" evidence="1">
    <location>
        <position position="297"/>
    </location>
    <ligand>
        <name>ATP</name>
        <dbReference type="ChEBI" id="CHEBI:30616"/>
    </ligand>
</feature>
<keyword id="KW-0067">ATP-binding</keyword>
<keyword id="KW-0436">Ligase</keyword>
<keyword id="KW-0547">Nucleotide-binding</keyword>
<keyword id="KW-1185">Reference proteome</keyword>
<reference key="1">
    <citation type="journal article" date="2003" name="Proc. Natl. Acad. Sci. U.S.A.">
        <title>Reductive genome evolution in Buchnera aphidicola.</title>
        <authorList>
            <person name="van Ham R.C.H.J."/>
            <person name="Kamerbeek J."/>
            <person name="Palacios C."/>
            <person name="Rausell C."/>
            <person name="Abascal F."/>
            <person name="Bastolla U."/>
            <person name="Fernandez J.M."/>
            <person name="Jimenez L."/>
            <person name="Postigo M."/>
            <person name="Silva F.J."/>
            <person name="Tamames J."/>
            <person name="Viguera E."/>
            <person name="Latorre A."/>
            <person name="Valencia A."/>
            <person name="Moran F."/>
            <person name="Moya A."/>
        </authorList>
    </citation>
    <scope>NUCLEOTIDE SEQUENCE [LARGE SCALE GENOMIC DNA]</scope>
    <source>
        <strain>Bp</strain>
    </source>
</reference>